<gene>
    <name evidence="1" type="primary">trpA</name>
    <name type="ordered locus">VV1216</name>
</gene>
<reference key="1">
    <citation type="journal article" date="2003" name="Genome Res.">
        <title>Comparative genome analysis of Vibrio vulnificus, a marine pathogen.</title>
        <authorList>
            <person name="Chen C.-Y."/>
            <person name="Wu K.-M."/>
            <person name="Chang Y.-C."/>
            <person name="Chang C.-H."/>
            <person name="Tsai H.-C."/>
            <person name="Liao T.-L."/>
            <person name="Liu Y.-M."/>
            <person name="Chen H.-J."/>
            <person name="Shen A.B.-T."/>
            <person name="Li J.-C."/>
            <person name="Su T.-L."/>
            <person name="Shao C.-P."/>
            <person name="Lee C.-T."/>
            <person name="Hor L.-I."/>
            <person name="Tsai S.-F."/>
        </authorList>
    </citation>
    <scope>NUCLEOTIDE SEQUENCE [LARGE SCALE GENOMIC DNA]</scope>
    <source>
        <strain>YJ016</strain>
    </source>
</reference>
<name>TRPA_VIBVY</name>
<sequence length="268" mass="28265">MDRYQATFERLAAQKQGAFVPFVTVCDPNPELSLKIMDTLVQAGADALELGIPFSDPLADGPTIQGANIRALDSGATPDICFDLIGQIRAKYPDLPIGLLMYANLVYSRGIENFYQRCAQAGIDSVLIADVPTNESAEFVAAAEKFGVHPIFIAPPTASDETLKQVSQLGGGYTYLLSRAGVTGAETKANMPVGDMLAKLEQFNAPPALLGFGISEPEQVKQAIDAGAAGAISGSAVVKIIESHLNEPDAMLTALANFVSSMKSATQK</sequence>
<accession>Q7MM57</accession>
<evidence type="ECO:0000255" key="1">
    <source>
        <dbReference type="HAMAP-Rule" id="MF_00131"/>
    </source>
</evidence>
<proteinExistence type="inferred from homology"/>
<feature type="chain" id="PRO_0000098873" description="Tryptophan synthase alpha chain">
    <location>
        <begin position="1"/>
        <end position="268"/>
    </location>
</feature>
<feature type="active site" description="Proton acceptor" evidence="1">
    <location>
        <position position="49"/>
    </location>
</feature>
<feature type="active site" description="Proton acceptor" evidence="1">
    <location>
        <position position="60"/>
    </location>
</feature>
<comment type="function">
    <text evidence="1">The alpha subunit is responsible for the aldol cleavage of indoleglycerol phosphate to indole and glyceraldehyde 3-phosphate.</text>
</comment>
<comment type="catalytic activity">
    <reaction evidence="1">
        <text>(1S,2R)-1-C-(indol-3-yl)glycerol 3-phosphate + L-serine = D-glyceraldehyde 3-phosphate + L-tryptophan + H2O</text>
        <dbReference type="Rhea" id="RHEA:10532"/>
        <dbReference type="ChEBI" id="CHEBI:15377"/>
        <dbReference type="ChEBI" id="CHEBI:33384"/>
        <dbReference type="ChEBI" id="CHEBI:57912"/>
        <dbReference type="ChEBI" id="CHEBI:58866"/>
        <dbReference type="ChEBI" id="CHEBI:59776"/>
        <dbReference type="EC" id="4.2.1.20"/>
    </reaction>
</comment>
<comment type="pathway">
    <text evidence="1">Amino-acid biosynthesis; L-tryptophan biosynthesis; L-tryptophan from chorismate: step 5/5.</text>
</comment>
<comment type="subunit">
    <text evidence="1">Tetramer of two alpha and two beta chains.</text>
</comment>
<comment type="similarity">
    <text evidence="1">Belongs to the TrpA family.</text>
</comment>
<organism>
    <name type="scientific">Vibrio vulnificus (strain YJ016)</name>
    <dbReference type="NCBI Taxonomy" id="196600"/>
    <lineage>
        <taxon>Bacteria</taxon>
        <taxon>Pseudomonadati</taxon>
        <taxon>Pseudomonadota</taxon>
        <taxon>Gammaproteobacteria</taxon>
        <taxon>Vibrionales</taxon>
        <taxon>Vibrionaceae</taxon>
        <taxon>Vibrio</taxon>
    </lineage>
</organism>
<dbReference type="EC" id="4.2.1.20" evidence="1"/>
<dbReference type="EMBL" id="BA000037">
    <property type="protein sequence ID" value="BAC93980.1"/>
    <property type="molecule type" value="Genomic_DNA"/>
</dbReference>
<dbReference type="RefSeq" id="WP_011149925.1">
    <property type="nucleotide sequence ID" value="NC_005139.1"/>
</dbReference>
<dbReference type="SMR" id="Q7MM57"/>
<dbReference type="STRING" id="672.VV93_v1c11340"/>
<dbReference type="KEGG" id="vvy:VV1216"/>
<dbReference type="PATRIC" id="fig|196600.6.peg.1209"/>
<dbReference type="eggNOG" id="COG0159">
    <property type="taxonomic scope" value="Bacteria"/>
</dbReference>
<dbReference type="HOGENOM" id="CLU_016734_0_4_6"/>
<dbReference type="UniPathway" id="UPA00035">
    <property type="reaction ID" value="UER00044"/>
</dbReference>
<dbReference type="Proteomes" id="UP000002675">
    <property type="component" value="Chromosome I"/>
</dbReference>
<dbReference type="GO" id="GO:0005829">
    <property type="term" value="C:cytosol"/>
    <property type="evidence" value="ECO:0007669"/>
    <property type="project" value="TreeGrafter"/>
</dbReference>
<dbReference type="GO" id="GO:0004834">
    <property type="term" value="F:tryptophan synthase activity"/>
    <property type="evidence" value="ECO:0007669"/>
    <property type="project" value="UniProtKB-UniRule"/>
</dbReference>
<dbReference type="CDD" id="cd04724">
    <property type="entry name" value="Tryptophan_synthase_alpha"/>
    <property type="match status" value="1"/>
</dbReference>
<dbReference type="FunFam" id="3.20.20.70:FF:000037">
    <property type="entry name" value="Tryptophan synthase alpha chain"/>
    <property type="match status" value="1"/>
</dbReference>
<dbReference type="Gene3D" id="3.20.20.70">
    <property type="entry name" value="Aldolase class I"/>
    <property type="match status" value="1"/>
</dbReference>
<dbReference type="HAMAP" id="MF_00131">
    <property type="entry name" value="Trp_synth_alpha"/>
    <property type="match status" value="1"/>
</dbReference>
<dbReference type="InterPro" id="IPR013785">
    <property type="entry name" value="Aldolase_TIM"/>
</dbReference>
<dbReference type="InterPro" id="IPR011060">
    <property type="entry name" value="RibuloseP-bd_barrel"/>
</dbReference>
<dbReference type="InterPro" id="IPR018204">
    <property type="entry name" value="Trp_synthase_alpha_AS"/>
</dbReference>
<dbReference type="InterPro" id="IPR002028">
    <property type="entry name" value="Trp_synthase_suA"/>
</dbReference>
<dbReference type="NCBIfam" id="TIGR00262">
    <property type="entry name" value="trpA"/>
    <property type="match status" value="1"/>
</dbReference>
<dbReference type="PANTHER" id="PTHR43406:SF1">
    <property type="entry name" value="TRYPTOPHAN SYNTHASE ALPHA CHAIN, CHLOROPLASTIC"/>
    <property type="match status" value="1"/>
</dbReference>
<dbReference type="PANTHER" id="PTHR43406">
    <property type="entry name" value="TRYPTOPHAN SYNTHASE, ALPHA CHAIN"/>
    <property type="match status" value="1"/>
</dbReference>
<dbReference type="Pfam" id="PF00290">
    <property type="entry name" value="Trp_syntA"/>
    <property type="match status" value="1"/>
</dbReference>
<dbReference type="SUPFAM" id="SSF51366">
    <property type="entry name" value="Ribulose-phoshate binding barrel"/>
    <property type="match status" value="1"/>
</dbReference>
<dbReference type="PROSITE" id="PS00167">
    <property type="entry name" value="TRP_SYNTHASE_ALPHA"/>
    <property type="match status" value="1"/>
</dbReference>
<keyword id="KW-0028">Amino-acid biosynthesis</keyword>
<keyword id="KW-0057">Aromatic amino acid biosynthesis</keyword>
<keyword id="KW-0456">Lyase</keyword>
<keyword id="KW-0822">Tryptophan biosynthesis</keyword>
<protein>
    <recommendedName>
        <fullName evidence="1">Tryptophan synthase alpha chain</fullName>
        <ecNumber evidence="1">4.2.1.20</ecNumber>
    </recommendedName>
</protein>